<sequence>MAPMNPPRLQRFPATASADQIFAAFKEDGCVVIEGFIPPDQVARFSQEVNPAMEKITVEVTNDGNSNDRTKRFSKCAIASPTFRNEIIESDLMHELCDRIFSNPGEGMGYHFNDTMVIEVQPGAPAQRLHRDQELYPWWNSMGPAGPECIMNFFCAVTPFTEENGATRLAPGSHLWPEFTQINERDCPQFGKIETAPAIMQPGDCYLMSGKVVHGAGHNTTTTDQRRALALSIIRRELRPVQAFSLSVPMKLAREMSERSQTMFGFRSAVQHCDGDMVHFWGNDGKDIAHHLGLEAPSVHI</sequence>
<evidence type="ECO:0000250" key="1">
    <source>
        <dbReference type="UniProtKB" id="Q5AR34"/>
    </source>
</evidence>
<evidence type="ECO:0000269" key="2">
    <source>
    </source>
</evidence>
<evidence type="ECO:0000303" key="3">
    <source>
    </source>
</evidence>
<evidence type="ECO:0000305" key="4"/>
<evidence type="ECO:0000305" key="5">
    <source>
    </source>
</evidence>
<gene>
    <name evidence="3" type="primary">ausE</name>
    <name type="ORF">PMG11_09847</name>
</gene>
<comment type="function">
    <text evidence="1 2">Multifunctional dioxygenase; part of the gene cluster A that mediates the biosynthesis of the fungal meroterpenoid acetoxydehydroaustin (PubMed:29076725). The first step of the pathway is the synthesis of 3,5-dimethylorsellinic acid by the polyketide synthase ausA (By similarity). 3,5-dimethylorsellinic acid is then prenylated by the polyprenyl transferase ausN (By similarity). Further epoxidation by the FAD-dependent monooxygenase ausM and cyclization by the probable terpene cyclase ausL lead to the formation of protoaustinoid A (By similarity). Protoaustinoid A is then oxidized to spiro-lactone preaustinoid A3 by the combined action of the FAD-binding monooxygenases ausB and ausC, and the dioxygenase ausE (By similarity). Acid-catalyzed keto-rearrangement and ring contraction of the tetraketide portion of preaustinoid A3 by ausJ lead to the formation of preaustinoid A4 (By similarity). The aldo-keto reductase ausK, with the help of ausH, is involved in the next step by transforming preaustinoid A4 into isoaustinone which is in turn hydroxylated by the P450 monooxygenase ausI to form austinolide (By similarity). The cytochrome P450 monooxygenase ausG then modifies austinolide to austinol (By similarity). Austinol is further acetylated to austin by the O-acetyltransferase ausP, which spontaneously changes to dehydroaustin (PubMed:29076725). The cytochrome P450 monooxygenase then converts dehydroaustin is into 7-dehydrodehydroaustin (PubMed:29076725). The hydroxylation catalyzed by ausR permits the second O-acetyltransferase ausQ to add an additional acetyl group to the molecule, leading to the formation of acetoxydehydroaustin (PubMed:29076725). Due to genetic rearrangements of the clusters and the subsequent loss of some enzymes, the end product of the Penicillium brasilianum austinoid biosynthesis clusters is acetoxydehydroaustin (PubMed:29076725).</text>
</comment>
<comment type="catalytic activity">
    <reaction evidence="1">
        <text>preaustinoid A1 + 2-oxoglutarate + O2 = preaustinoid A2 + succinate + CO2 + H2O</text>
        <dbReference type="Rhea" id="RHEA:65132"/>
        <dbReference type="ChEBI" id="CHEBI:15377"/>
        <dbReference type="ChEBI" id="CHEBI:15379"/>
        <dbReference type="ChEBI" id="CHEBI:16526"/>
        <dbReference type="ChEBI" id="CHEBI:16810"/>
        <dbReference type="ChEBI" id="CHEBI:30031"/>
        <dbReference type="ChEBI" id="CHEBI:69026"/>
        <dbReference type="ChEBI" id="CHEBI:156343"/>
    </reaction>
    <physiologicalReaction direction="left-to-right" evidence="1">
        <dbReference type="Rhea" id="RHEA:65133"/>
    </physiologicalReaction>
</comment>
<comment type="catalytic activity">
    <reaction evidence="1">
        <text>preaustinoid A2 + 2-oxoglutarate + O2 = preaustinoid A3 + succinate + CO2 + H2O</text>
        <dbReference type="Rhea" id="RHEA:65156"/>
        <dbReference type="ChEBI" id="CHEBI:15377"/>
        <dbReference type="ChEBI" id="CHEBI:15379"/>
        <dbReference type="ChEBI" id="CHEBI:16526"/>
        <dbReference type="ChEBI" id="CHEBI:16810"/>
        <dbReference type="ChEBI" id="CHEBI:30031"/>
        <dbReference type="ChEBI" id="CHEBI:156343"/>
        <dbReference type="ChEBI" id="CHEBI:156346"/>
    </reaction>
    <physiologicalReaction direction="left-to-right" evidence="1">
        <dbReference type="Rhea" id="RHEA:65157"/>
    </physiologicalReaction>
</comment>
<comment type="catalytic activity">
    <reaction evidence="1">
        <text>berkeleyone A + 2-oxoglutarate + O2 = preaustinoid A + succinate + CO2 + H2O</text>
        <dbReference type="Rhea" id="RHEA:65144"/>
        <dbReference type="ChEBI" id="CHEBI:15377"/>
        <dbReference type="ChEBI" id="CHEBI:15379"/>
        <dbReference type="ChEBI" id="CHEBI:16526"/>
        <dbReference type="ChEBI" id="CHEBI:16810"/>
        <dbReference type="ChEBI" id="CHEBI:30031"/>
        <dbReference type="ChEBI" id="CHEBI:69023"/>
        <dbReference type="ChEBI" id="CHEBI:69024"/>
    </reaction>
    <physiologicalReaction direction="left-to-right" evidence="1">
        <dbReference type="Rhea" id="RHEA:65145"/>
    </physiologicalReaction>
</comment>
<comment type="cofactor">
    <cofactor evidence="1">
        <name>Fe cation</name>
        <dbReference type="ChEBI" id="CHEBI:24875"/>
    </cofactor>
</comment>
<comment type="pathway">
    <text evidence="5">Secondary metabolite biosynthesis; terpenoid biosynthesis.</text>
</comment>
<comment type="subunit">
    <text evidence="1">Homodimer.</text>
</comment>
<comment type="miscellaneous">
    <text evidence="5">In A.calidoustus, the austinoid gene cluster lies on a contiguous DNA region, while clusters from E.nidulans and P.brasilianum are split in their respective genomes. Genetic rearrangements provoked variability among the clusters and E.nidulans produces the least number of austionoid derivatives with the end products austinol and dehydroaustinol, while P.brasilianum can produce until acetoxydehydroaustin, and A.calidoustus produces the highest number of identified derivatives.</text>
</comment>
<comment type="similarity">
    <text evidence="4">Belongs to the PhyH family.</text>
</comment>
<dbReference type="EC" id="1.14.11.-" evidence="5"/>
<dbReference type="EMBL" id="CDHK01000010">
    <property type="protein sequence ID" value="CEJ61311.1"/>
    <property type="molecule type" value="Genomic_DNA"/>
</dbReference>
<dbReference type="SMR" id="A0A0F7TZD6"/>
<dbReference type="STRING" id="104259.A0A0F7TZD6"/>
<dbReference type="OrthoDB" id="445007at2759"/>
<dbReference type="UniPathway" id="UPA00213"/>
<dbReference type="Proteomes" id="UP000042958">
    <property type="component" value="Unassembled WGS sequence"/>
</dbReference>
<dbReference type="GO" id="GO:0051213">
    <property type="term" value="F:dioxygenase activity"/>
    <property type="evidence" value="ECO:0007669"/>
    <property type="project" value="UniProtKB-KW"/>
</dbReference>
<dbReference type="GO" id="GO:0046872">
    <property type="term" value="F:metal ion binding"/>
    <property type="evidence" value="ECO:0007669"/>
    <property type="project" value="UniProtKB-KW"/>
</dbReference>
<dbReference type="GO" id="GO:0016114">
    <property type="term" value="P:terpenoid biosynthetic process"/>
    <property type="evidence" value="ECO:0007669"/>
    <property type="project" value="UniProtKB-UniPathway"/>
</dbReference>
<dbReference type="Gene3D" id="2.60.120.620">
    <property type="entry name" value="q2cbj1_9rhob like domain"/>
    <property type="match status" value="1"/>
</dbReference>
<dbReference type="InterPro" id="IPR008775">
    <property type="entry name" value="Phytyl_CoA_dOase-like"/>
</dbReference>
<dbReference type="PANTHER" id="PTHR20883:SF19">
    <property type="entry name" value="MULTIFUNCTIONAL DIOXYGENASE AUSE"/>
    <property type="match status" value="1"/>
</dbReference>
<dbReference type="PANTHER" id="PTHR20883">
    <property type="entry name" value="PHYTANOYL-COA DIOXYGENASE DOMAIN CONTAINING 1"/>
    <property type="match status" value="1"/>
</dbReference>
<dbReference type="Pfam" id="PF05721">
    <property type="entry name" value="PhyH"/>
    <property type="match status" value="1"/>
</dbReference>
<dbReference type="SUPFAM" id="SSF51197">
    <property type="entry name" value="Clavaminate synthase-like"/>
    <property type="match status" value="1"/>
</dbReference>
<accession>A0A0F7TZD6</accession>
<reference key="1">
    <citation type="journal article" date="2015" name="Genome Announc.">
        <title>Draft genome sequence of the fungus Penicillium brasilianum MG11.</title>
        <authorList>
            <person name="Horn F."/>
            <person name="Linde J."/>
            <person name="Mattern D.J."/>
            <person name="Walther G."/>
            <person name="Guthke R."/>
            <person name="Brakhage A.A."/>
            <person name="Valiante V."/>
        </authorList>
    </citation>
    <scope>NUCLEOTIDE SEQUENCE [LARGE SCALE GENOMIC DNA]</scope>
    <source>
        <strain>MG11</strain>
    </source>
</reference>
<reference key="2">
    <citation type="journal article" date="2016" name="J. Am. Chem. Soc.">
        <title>Discovery of key dioxygenases that diverged the paraherquonin and acetoxydehydroaustin pathways in Penicillium brasilianum.</title>
        <authorList>
            <person name="Matsuda Y."/>
            <person name="Iwabuchi T."/>
            <person name="Fujimoto T."/>
            <person name="Awakawa T."/>
            <person name="Nakashima Y."/>
            <person name="Mori T."/>
            <person name="Zhang H."/>
            <person name="Hayashi F."/>
            <person name="Abe I."/>
        </authorList>
    </citation>
    <scope>FUNCTION</scope>
    <scope>CATALYTIC ACTIVITY</scope>
    <scope>PATHWAY</scope>
</reference>
<reference key="3">
    <citation type="journal article" date="2017" name="ACS Chem. Biol.">
        <title>Rewiring of the austinoid biosynthetic pathway in filamentous fungi.</title>
        <authorList>
            <person name="Mattern D.J."/>
            <person name="Valiante V."/>
            <person name="Horn F."/>
            <person name="Petzke L."/>
            <person name="Brakhage A.A."/>
        </authorList>
    </citation>
    <scope>FUNCTION</scope>
</reference>
<protein>
    <recommendedName>
        <fullName evidence="3">Multifunctional dioxygenase ausE</fullName>
        <ecNumber evidence="5">1.14.11.-</ecNumber>
    </recommendedName>
    <alternativeName>
        <fullName evidence="3">Austinoid biosynthesis clusters protein E</fullName>
    </alternativeName>
</protein>
<proteinExistence type="evidence at protein level"/>
<organism>
    <name type="scientific">Penicillium brasilianum</name>
    <dbReference type="NCBI Taxonomy" id="104259"/>
    <lineage>
        <taxon>Eukaryota</taxon>
        <taxon>Fungi</taxon>
        <taxon>Dikarya</taxon>
        <taxon>Ascomycota</taxon>
        <taxon>Pezizomycotina</taxon>
        <taxon>Eurotiomycetes</taxon>
        <taxon>Eurotiomycetidae</taxon>
        <taxon>Eurotiales</taxon>
        <taxon>Aspergillaceae</taxon>
        <taxon>Penicillium</taxon>
    </lineage>
</organism>
<keyword id="KW-0223">Dioxygenase</keyword>
<keyword id="KW-0408">Iron</keyword>
<keyword id="KW-0479">Metal-binding</keyword>
<keyword id="KW-0560">Oxidoreductase</keyword>
<keyword id="KW-1185">Reference proteome</keyword>
<feature type="chain" id="PRO_0000453853" description="Multifunctional dioxygenase ausE">
    <location>
        <begin position="1"/>
        <end position="301"/>
    </location>
</feature>
<feature type="binding site" evidence="1">
    <location>
        <position position="72"/>
    </location>
    <ligand>
        <name>substrate</name>
    </ligand>
</feature>
<feature type="binding site" evidence="1">
    <location>
        <position position="127"/>
    </location>
    <ligand>
        <name>substrate</name>
    </ligand>
</feature>
<feature type="binding site" evidence="1">
    <location>
        <position position="130"/>
    </location>
    <ligand>
        <name>Fe cation</name>
        <dbReference type="ChEBI" id="CHEBI:24875"/>
    </ligand>
</feature>
<feature type="binding site" evidence="1">
    <location>
        <position position="132"/>
    </location>
    <ligand>
        <name>Fe cation</name>
        <dbReference type="ChEBI" id="CHEBI:24875"/>
    </ligand>
</feature>
<feature type="binding site" evidence="1">
    <location>
        <position position="167"/>
    </location>
    <ligand>
        <name>substrate</name>
    </ligand>
</feature>
<feature type="binding site" evidence="1">
    <location>
        <position position="214"/>
    </location>
    <ligand>
        <name>Fe cation</name>
        <dbReference type="ChEBI" id="CHEBI:24875"/>
    </ligand>
</feature>
<feature type="binding site" evidence="1">
    <location>
        <position position="226"/>
    </location>
    <ligand>
        <name>substrate</name>
    </ligand>
</feature>
<feature type="site" description="Important for reaction specificity" evidence="1">
    <location>
        <position position="232"/>
    </location>
</feature>
<name>AUSE_PENBI</name>